<keyword id="KW-0012">Acyltransferase</keyword>
<keyword id="KW-0028">Amino-acid biosynthesis</keyword>
<keyword id="KW-0963">Cytoplasm</keyword>
<keyword id="KW-0220">Diaminopimelate biosynthesis</keyword>
<keyword id="KW-0457">Lysine biosynthesis</keyword>
<keyword id="KW-0677">Repeat</keyword>
<keyword id="KW-0808">Transferase</keyword>
<organism>
    <name type="scientific">Chelativorans sp. (strain BNC1)</name>
    <dbReference type="NCBI Taxonomy" id="266779"/>
    <lineage>
        <taxon>Bacteria</taxon>
        <taxon>Pseudomonadati</taxon>
        <taxon>Pseudomonadota</taxon>
        <taxon>Alphaproteobacteria</taxon>
        <taxon>Hyphomicrobiales</taxon>
        <taxon>Phyllobacteriaceae</taxon>
        <taxon>Chelativorans</taxon>
    </lineage>
</organism>
<comment type="catalytic activity">
    <reaction evidence="1">
        <text>(S)-2,3,4,5-tetrahydrodipicolinate + succinyl-CoA + H2O = (S)-2-succinylamino-6-oxoheptanedioate + CoA</text>
        <dbReference type="Rhea" id="RHEA:17325"/>
        <dbReference type="ChEBI" id="CHEBI:15377"/>
        <dbReference type="ChEBI" id="CHEBI:15685"/>
        <dbReference type="ChEBI" id="CHEBI:16845"/>
        <dbReference type="ChEBI" id="CHEBI:57287"/>
        <dbReference type="ChEBI" id="CHEBI:57292"/>
        <dbReference type="EC" id="2.3.1.117"/>
    </reaction>
</comment>
<comment type="pathway">
    <text evidence="1">Amino-acid biosynthesis; L-lysine biosynthesis via DAP pathway; LL-2,6-diaminopimelate from (S)-tetrahydrodipicolinate (succinylase route): step 1/3.</text>
</comment>
<comment type="subunit">
    <text evidence="1">Homotrimer.</text>
</comment>
<comment type="subcellular location">
    <subcellularLocation>
        <location evidence="1">Cytoplasm</location>
    </subcellularLocation>
</comment>
<comment type="similarity">
    <text evidence="1">Belongs to the transferase hexapeptide repeat family.</text>
</comment>
<name>DAPD_CHESB</name>
<proteinExistence type="inferred from homology"/>
<accession>Q11LD4</accession>
<evidence type="ECO:0000255" key="1">
    <source>
        <dbReference type="HAMAP-Rule" id="MF_00811"/>
    </source>
</evidence>
<dbReference type="EC" id="2.3.1.117" evidence="1"/>
<dbReference type="EMBL" id="CP000390">
    <property type="protein sequence ID" value="ABG61791.1"/>
    <property type="molecule type" value="Genomic_DNA"/>
</dbReference>
<dbReference type="SMR" id="Q11LD4"/>
<dbReference type="STRING" id="266779.Meso_0387"/>
<dbReference type="KEGG" id="mes:Meso_0387"/>
<dbReference type="eggNOG" id="COG2171">
    <property type="taxonomic scope" value="Bacteria"/>
</dbReference>
<dbReference type="HOGENOM" id="CLU_050859_0_1_5"/>
<dbReference type="OrthoDB" id="9775362at2"/>
<dbReference type="UniPathway" id="UPA00034">
    <property type="reaction ID" value="UER00019"/>
</dbReference>
<dbReference type="GO" id="GO:0005737">
    <property type="term" value="C:cytoplasm"/>
    <property type="evidence" value="ECO:0007669"/>
    <property type="project" value="UniProtKB-SubCell"/>
</dbReference>
<dbReference type="GO" id="GO:0008666">
    <property type="term" value="F:2,3,4,5-tetrahydropyridine-2,6-dicarboxylate N-succinyltransferase activity"/>
    <property type="evidence" value="ECO:0007669"/>
    <property type="project" value="UniProtKB-UniRule"/>
</dbReference>
<dbReference type="GO" id="GO:0019877">
    <property type="term" value="P:diaminopimelate biosynthetic process"/>
    <property type="evidence" value="ECO:0007669"/>
    <property type="project" value="UniProtKB-UniRule"/>
</dbReference>
<dbReference type="GO" id="GO:0009089">
    <property type="term" value="P:lysine biosynthetic process via diaminopimelate"/>
    <property type="evidence" value="ECO:0007669"/>
    <property type="project" value="UniProtKB-UniRule"/>
</dbReference>
<dbReference type="CDD" id="cd03350">
    <property type="entry name" value="LbH_THP_succinylT"/>
    <property type="match status" value="1"/>
</dbReference>
<dbReference type="Gene3D" id="2.160.10.10">
    <property type="entry name" value="Hexapeptide repeat proteins"/>
    <property type="match status" value="1"/>
</dbReference>
<dbReference type="Gene3D" id="1.10.166.10">
    <property type="entry name" value="Tetrahydrodipicolinate-N-succinyltransferase, N-terminal domain"/>
    <property type="match status" value="1"/>
</dbReference>
<dbReference type="HAMAP" id="MF_00811">
    <property type="entry name" value="DapD"/>
    <property type="match status" value="1"/>
</dbReference>
<dbReference type="InterPro" id="IPR005664">
    <property type="entry name" value="DapD_Trfase_Hexpep_rpt_fam"/>
</dbReference>
<dbReference type="InterPro" id="IPR001451">
    <property type="entry name" value="Hexapep"/>
</dbReference>
<dbReference type="InterPro" id="IPR018357">
    <property type="entry name" value="Hexapep_transf_CS"/>
</dbReference>
<dbReference type="InterPro" id="IPR023180">
    <property type="entry name" value="THP_succinylTrfase_dom1"/>
</dbReference>
<dbReference type="InterPro" id="IPR037133">
    <property type="entry name" value="THP_succinylTrfase_N_sf"/>
</dbReference>
<dbReference type="InterPro" id="IPR050179">
    <property type="entry name" value="Trans_hexapeptide_repeat"/>
</dbReference>
<dbReference type="InterPro" id="IPR011004">
    <property type="entry name" value="Trimer_LpxA-like_sf"/>
</dbReference>
<dbReference type="NCBIfam" id="TIGR00965">
    <property type="entry name" value="dapD"/>
    <property type="match status" value="1"/>
</dbReference>
<dbReference type="NCBIfam" id="NF008808">
    <property type="entry name" value="PRK11830.1"/>
    <property type="match status" value="1"/>
</dbReference>
<dbReference type="PANTHER" id="PTHR43300:SF10">
    <property type="entry name" value="2,3,4,5-TETRAHYDROPYRIDINE-2,6-DICARBOXYLATE N-ACETYLTRANSFERASE"/>
    <property type="match status" value="1"/>
</dbReference>
<dbReference type="PANTHER" id="PTHR43300">
    <property type="entry name" value="ACETYLTRANSFERASE"/>
    <property type="match status" value="1"/>
</dbReference>
<dbReference type="Pfam" id="PF14602">
    <property type="entry name" value="Hexapep_2"/>
    <property type="match status" value="1"/>
</dbReference>
<dbReference type="Pfam" id="PF14805">
    <property type="entry name" value="THDPS_N_2"/>
    <property type="match status" value="1"/>
</dbReference>
<dbReference type="SUPFAM" id="SSF51161">
    <property type="entry name" value="Trimeric LpxA-like enzymes"/>
    <property type="match status" value="1"/>
</dbReference>
<dbReference type="PROSITE" id="PS00101">
    <property type="entry name" value="HEXAPEP_TRANSFERASES"/>
    <property type="match status" value="1"/>
</dbReference>
<gene>
    <name evidence="1" type="primary">dapD</name>
    <name type="ordered locus">Meso_0387</name>
</gene>
<reference key="1">
    <citation type="submission" date="2006-06" db="EMBL/GenBank/DDBJ databases">
        <title>Complete sequence of chromosome of Mesorhizobium sp. BNC1.</title>
        <authorList>
            <consortium name="US DOE Joint Genome Institute"/>
            <person name="Copeland A."/>
            <person name="Lucas S."/>
            <person name="Lapidus A."/>
            <person name="Barry K."/>
            <person name="Detter J.C."/>
            <person name="Glavina del Rio T."/>
            <person name="Hammon N."/>
            <person name="Israni S."/>
            <person name="Dalin E."/>
            <person name="Tice H."/>
            <person name="Pitluck S."/>
            <person name="Chertkov O."/>
            <person name="Brettin T."/>
            <person name="Bruce D."/>
            <person name="Han C."/>
            <person name="Tapia R."/>
            <person name="Gilna P."/>
            <person name="Schmutz J."/>
            <person name="Larimer F."/>
            <person name="Land M."/>
            <person name="Hauser L."/>
            <person name="Kyrpides N."/>
            <person name="Mikhailova N."/>
            <person name="Richardson P."/>
        </authorList>
    </citation>
    <scope>NUCLEOTIDE SEQUENCE [LARGE SCALE GENOMIC DNA]</scope>
    <source>
        <strain>BNC1</strain>
    </source>
</reference>
<sequence>MKTSDIAALEQTVEKAFENRDSVNTETRGEIREAVEAALDLLDSGGMRVAQRGEDGQWTVNQWLKKAVLLSFRLNPMQIIKGGPGDAVWWDKVSSKFDGWSSNEFEKAGFRAVPNCIVRRSAYIAPGAVLMPSFVNLGAYVGRNTMVDTWATVGSCAQIGENVHLSGGVGIGGVLEPMQAGPTIIEDNCFIGARSEVVEGCIVREGSVLGMGVFIGKSTKIVDRETGQIFYGEVPPYSVVVAGTMPGKTMANGEPGPNLYCAVIVKRVDEKTRSKTSINDLLRD</sequence>
<protein>
    <recommendedName>
        <fullName evidence="1">2,3,4,5-tetrahydropyridine-2,6-dicarboxylate N-succinyltransferase</fullName>
        <ecNumber evidence="1">2.3.1.117</ecNumber>
    </recommendedName>
    <alternativeName>
        <fullName evidence="1">Tetrahydrodipicolinate N-succinyltransferase</fullName>
        <shortName evidence="1">THDP succinyltransferase</shortName>
        <shortName evidence="1">THP succinyltransferase</shortName>
        <shortName evidence="1">Tetrahydropicolinate succinylase</shortName>
    </alternativeName>
</protein>
<feature type="chain" id="PRO_1000047151" description="2,3,4,5-tetrahydropyridine-2,6-dicarboxylate N-succinyltransferase">
    <location>
        <begin position="1"/>
        <end position="284"/>
    </location>
</feature>
<feature type="binding site" evidence="1">
    <location>
        <position position="111"/>
    </location>
    <ligand>
        <name>substrate</name>
    </ligand>
</feature>
<feature type="binding site" evidence="1">
    <location>
        <position position="148"/>
    </location>
    <ligand>
        <name>substrate</name>
    </ligand>
</feature>